<keyword id="KW-0002">3D-structure</keyword>
<keyword id="KW-0067">ATP-binding</keyword>
<keyword id="KW-0119">Carbohydrate metabolism</keyword>
<keyword id="KW-0418">Kinase</keyword>
<keyword id="KW-0479">Metal-binding</keyword>
<keyword id="KW-0547">Nucleotide-binding</keyword>
<keyword id="KW-1185">Reference proteome</keyword>
<keyword id="KW-0808">Transferase</keyword>
<keyword id="KW-0862">Zinc</keyword>
<accession>Q8ZPZ9</accession>
<name>NAGK_SALTY</name>
<evidence type="ECO:0000250" key="1"/>
<evidence type="ECO:0000255" key="2"/>
<evidence type="ECO:0000269" key="3">
    <source>
    </source>
</evidence>
<evidence type="ECO:0000269" key="4">
    <source ref="2"/>
</evidence>
<evidence type="ECO:0000305" key="5"/>
<evidence type="ECO:0007829" key="6">
    <source>
        <dbReference type="PDB" id="2AP1"/>
    </source>
</evidence>
<proteinExistence type="evidence at protein level"/>
<reference key="1">
    <citation type="journal article" date="2001" name="Nature">
        <title>Complete genome sequence of Salmonella enterica serovar Typhimurium LT2.</title>
        <authorList>
            <person name="McClelland M."/>
            <person name="Sanderson K.E."/>
            <person name="Spieth J."/>
            <person name="Clifton S.W."/>
            <person name="Latreille P."/>
            <person name="Courtney L."/>
            <person name="Porwollik S."/>
            <person name="Ali J."/>
            <person name="Dante M."/>
            <person name="Du F."/>
            <person name="Hou S."/>
            <person name="Layman D."/>
            <person name="Leonard S."/>
            <person name="Nguyen C."/>
            <person name="Scott K."/>
            <person name="Holmes A."/>
            <person name="Grewal N."/>
            <person name="Mulvaney E."/>
            <person name="Ryan E."/>
            <person name="Sun H."/>
            <person name="Florea L."/>
            <person name="Miller W."/>
            <person name="Stoneking T."/>
            <person name="Nhan M."/>
            <person name="Waterston R."/>
            <person name="Wilson R.K."/>
        </authorList>
    </citation>
    <scope>NUCLEOTIDE SEQUENCE [LARGE SCALE GENOMIC DNA]</scope>
    <source>
        <strain>LT2 / SGSC1412 / ATCC 700720</strain>
    </source>
</reference>
<reference key="2">
    <citation type="submission" date="2005-09" db="PDB data bank">
        <title>Crystal structure of the putative regulatory protein.</title>
        <authorList>
            <consortium name="Midwest center for structural genomics (MCSG)"/>
        </authorList>
    </citation>
    <scope>X-RAY CRYSTALLOGRAPHY (1.9 ANGSTROMS) IN COMPLEX WITH ZINC</scope>
</reference>
<reference key="3">
    <citation type="journal article" date="2010" name="J. Bacteriol.">
        <title>Biologically active isoforms of CobB sirtuin deacetylase in Salmonella enterica and Erwinia amylovora.</title>
        <authorList>
            <person name="Tucker A.C."/>
            <person name="Escalante-Semerena J.C."/>
        </authorList>
    </citation>
    <scope>INDUCTION</scope>
    <source>
        <strain>LT2 / SGSC1412 / ATCC 700720</strain>
    </source>
</reference>
<protein>
    <recommendedName>
        <fullName>N-acetyl-D-glucosamine kinase</fullName>
        <ecNumber>2.7.1.59</ecNumber>
    </recommendedName>
    <alternativeName>
        <fullName>GlcNAc kinase</fullName>
    </alternativeName>
</protein>
<gene>
    <name type="primary">nagK</name>
    <name type="synonym">ycfX</name>
    <name type="ordered locus">STM1220</name>
</gene>
<sequence>MYYGFDIGGTKIALGVFDSTRRLQWEKRVPTPHTSYSAFLDAVCELVEEADQRFGVKGSVGIGIPGMPETEDGTLYAANVPAASGKPLRADLSARLDRDVRLDNDANCFALSEAWDDEFTQYPLVMGLILGTGVGGGLVLNGKPITGQSYITGEFGHMRLPVDALTLMGFDFPLRRCGCGQMGCIENYLSGRGFAWLYQHYYDQSLQAPEIIALWEQGDEQAHAHVERYLDLLAVCLGNILTIVDPDLLVIGGGLSNFTAITTQLAERLPRHLLPVARAPRIERARHGDAGGMRGAAFLHLTD</sequence>
<feature type="chain" id="PRO_0000270114" description="N-acetyl-D-glucosamine kinase">
    <location>
        <begin position="1"/>
        <end position="303"/>
    </location>
</feature>
<feature type="binding site" evidence="2">
    <location>
        <begin position="4"/>
        <end position="11"/>
    </location>
    <ligand>
        <name>ATP</name>
        <dbReference type="ChEBI" id="CHEBI:30616"/>
    </ligand>
</feature>
<feature type="binding site" evidence="2">
    <location>
        <begin position="133"/>
        <end position="140"/>
    </location>
    <ligand>
        <name>ATP</name>
        <dbReference type="ChEBI" id="CHEBI:30616"/>
    </ligand>
</feature>
<feature type="binding site" evidence="4">
    <location>
        <position position="157"/>
    </location>
    <ligand>
        <name>Zn(2+)</name>
        <dbReference type="ChEBI" id="CHEBI:29105"/>
    </ligand>
</feature>
<feature type="binding site" evidence="4">
    <location>
        <position position="177"/>
    </location>
    <ligand>
        <name>Zn(2+)</name>
        <dbReference type="ChEBI" id="CHEBI:29105"/>
    </ligand>
</feature>
<feature type="binding site" evidence="4">
    <location>
        <position position="179"/>
    </location>
    <ligand>
        <name>Zn(2+)</name>
        <dbReference type="ChEBI" id="CHEBI:29105"/>
    </ligand>
</feature>
<feature type="binding site" evidence="4">
    <location>
        <position position="184"/>
    </location>
    <ligand>
        <name>Zn(2+)</name>
        <dbReference type="ChEBI" id="CHEBI:29105"/>
    </ligand>
</feature>
<feature type="strand" evidence="6">
    <location>
        <begin position="1"/>
        <end position="7"/>
    </location>
</feature>
<feature type="strand" evidence="6">
    <location>
        <begin position="9"/>
        <end position="18"/>
    </location>
</feature>
<feature type="strand" evidence="6">
    <location>
        <begin position="23"/>
        <end position="30"/>
    </location>
</feature>
<feature type="helix" evidence="6">
    <location>
        <begin position="36"/>
        <end position="54"/>
    </location>
</feature>
<feature type="strand" evidence="6">
    <location>
        <begin position="59"/>
        <end position="68"/>
    </location>
</feature>
<feature type="turn" evidence="6">
    <location>
        <begin position="81"/>
        <end position="85"/>
    </location>
</feature>
<feature type="helix" evidence="6">
    <location>
        <begin position="88"/>
        <end position="96"/>
    </location>
</feature>
<feature type="strand" evidence="6">
    <location>
        <begin position="100"/>
        <end position="104"/>
    </location>
</feature>
<feature type="helix" evidence="6">
    <location>
        <begin position="105"/>
        <end position="114"/>
    </location>
</feature>
<feature type="helix" evidence="6">
    <location>
        <begin position="119"/>
        <end position="121"/>
    </location>
</feature>
<feature type="strand" evidence="6">
    <location>
        <begin position="123"/>
        <end position="140"/>
    </location>
</feature>
<feature type="strand" evidence="6">
    <location>
        <begin position="143"/>
        <end position="145"/>
    </location>
</feature>
<feature type="helix" evidence="6">
    <location>
        <begin position="155"/>
        <end position="157"/>
    </location>
</feature>
<feature type="helix" evidence="6">
    <location>
        <begin position="162"/>
        <end position="168"/>
    </location>
</feature>
<feature type="strand" evidence="6">
    <location>
        <begin position="182"/>
        <end position="184"/>
    </location>
</feature>
<feature type="helix" evidence="6">
    <location>
        <begin position="186"/>
        <end position="189"/>
    </location>
</feature>
<feature type="helix" evidence="6">
    <location>
        <begin position="191"/>
        <end position="202"/>
    </location>
</feature>
<feature type="helix" evidence="6">
    <location>
        <begin position="208"/>
        <end position="216"/>
    </location>
</feature>
<feature type="helix" evidence="6">
    <location>
        <begin position="220"/>
        <end position="244"/>
    </location>
</feature>
<feature type="strand" evidence="6">
    <location>
        <begin position="247"/>
        <end position="253"/>
    </location>
</feature>
<feature type="helix" evidence="6">
    <location>
        <begin position="254"/>
        <end position="257"/>
    </location>
</feature>
<feature type="helix" evidence="6">
    <location>
        <begin position="260"/>
        <end position="263"/>
    </location>
</feature>
<feature type="helix" evidence="6">
    <location>
        <begin position="266"/>
        <end position="268"/>
    </location>
</feature>
<feature type="helix" evidence="6">
    <location>
        <begin position="270"/>
        <end position="272"/>
    </location>
</feature>
<feature type="strand" evidence="6">
    <location>
        <begin position="281"/>
        <end position="284"/>
    </location>
</feature>
<feature type="turn" evidence="6">
    <location>
        <begin position="288"/>
        <end position="290"/>
    </location>
</feature>
<feature type="helix" evidence="6">
    <location>
        <begin position="291"/>
        <end position="298"/>
    </location>
</feature>
<comment type="function">
    <text evidence="1">Catalyzes the phosphorylation of N-acetyl-D-glucosamine (GlcNAc) derived from cell-wall degradation, yielding GlcNAc-6-P.</text>
</comment>
<comment type="catalytic activity">
    <reaction>
        <text>N-acetyl-D-glucosamine + ATP = N-acetyl-D-glucosamine 6-phosphate + ADP + H(+)</text>
        <dbReference type="Rhea" id="RHEA:17417"/>
        <dbReference type="ChEBI" id="CHEBI:15378"/>
        <dbReference type="ChEBI" id="CHEBI:30616"/>
        <dbReference type="ChEBI" id="CHEBI:57513"/>
        <dbReference type="ChEBI" id="CHEBI:456216"/>
        <dbReference type="ChEBI" id="CHEBI:506227"/>
        <dbReference type="EC" id="2.7.1.59"/>
    </reaction>
</comment>
<comment type="pathway">
    <text>Cell wall biogenesis; peptidoglycan recycling.</text>
</comment>
<comment type="induction">
    <text evidence="3">Expressed in mid-log phase, part of the nagK-cobB operon (PubMed:20889757).</text>
</comment>
<comment type="similarity">
    <text evidence="5">Belongs to the ROK (NagC/XylR) family. NagK subfamily.</text>
</comment>
<dbReference type="EC" id="2.7.1.59"/>
<dbReference type="EMBL" id="AE006468">
    <property type="protein sequence ID" value="AAL20149.1"/>
    <property type="molecule type" value="Genomic_DNA"/>
</dbReference>
<dbReference type="RefSeq" id="NP_460190.1">
    <property type="nucleotide sequence ID" value="NC_003197.2"/>
</dbReference>
<dbReference type="RefSeq" id="WP_000291338.1">
    <property type="nucleotide sequence ID" value="NC_003197.2"/>
</dbReference>
<dbReference type="PDB" id="2AP1">
    <property type="method" value="X-ray"/>
    <property type="resolution" value="1.90 A"/>
    <property type="chains" value="A=1-303"/>
</dbReference>
<dbReference type="PDBsum" id="2AP1"/>
<dbReference type="SMR" id="Q8ZPZ9"/>
<dbReference type="STRING" id="99287.STM1220"/>
<dbReference type="PaxDb" id="99287-STM1220"/>
<dbReference type="DNASU" id="1252738"/>
<dbReference type="GeneID" id="1252738"/>
<dbReference type="KEGG" id="stm:STM1220"/>
<dbReference type="PATRIC" id="fig|99287.12.peg.1289"/>
<dbReference type="HOGENOM" id="CLU_036604_0_3_6"/>
<dbReference type="OMA" id="VNVPGWR"/>
<dbReference type="PhylomeDB" id="Q8ZPZ9"/>
<dbReference type="BioCyc" id="SENT99287:STM1220-MONOMER"/>
<dbReference type="UniPathway" id="UPA00544"/>
<dbReference type="EvolutionaryTrace" id="Q8ZPZ9"/>
<dbReference type="Proteomes" id="UP000001014">
    <property type="component" value="Chromosome"/>
</dbReference>
<dbReference type="GO" id="GO:0005524">
    <property type="term" value="F:ATP binding"/>
    <property type="evidence" value="ECO:0007669"/>
    <property type="project" value="UniProtKB-UniRule"/>
</dbReference>
<dbReference type="GO" id="GO:0045127">
    <property type="term" value="F:N-acetylglucosamine kinase activity"/>
    <property type="evidence" value="ECO:0000318"/>
    <property type="project" value="GO_Central"/>
</dbReference>
<dbReference type="GO" id="GO:0008270">
    <property type="term" value="F:zinc ion binding"/>
    <property type="evidence" value="ECO:0007669"/>
    <property type="project" value="UniProtKB-UniRule"/>
</dbReference>
<dbReference type="GO" id="GO:0006044">
    <property type="term" value="P:N-acetylglucosamine metabolic process"/>
    <property type="evidence" value="ECO:0007669"/>
    <property type="project" value="UniProtKB-UniRule"/>
</dbReference>
<dbReference type="GO" id="GO:0009254">
    <property type="term" value="P:peptidoglycan turnover"/>
    <property type="evidence" value="ECO:0007669"/>
    <property type="project" value="UniProtKB-UniRule"/>
</dbReference>
<dbReference type="CDD" id="cd24057">
    <property type="entry name" value="ASKHA_NBD_ROK_NAGK"/>
    <property type="match status" value="1"/>
</dbReference>
<dbReference type="FunFam" id="3.30.420.40:FF:000049">
    <property type="entry name" value="N-acetyl-D-glucosamine kinase"/>
    <property type="match status" value="1"/>
</dbReference>
<dbReference type="FunFam" id="3.30.420.40:FF:000051">
    <property type="entry name" value="N-acetyl-D-glucosamine kinase"/>
    <property type="match status" value="1"/>
</dbReference>
<dbReference type="Gene3D" id="3.30.420.40">
    <property type="match status" value="2"/>
</dbReference>
<dbReference type="HAMAP" id="MF_01271">
    <property type="entry name" value="GlcNAc_kinase"/>
    <property type="match status" value="1"/>
</dbReference>
<dbReference type="InterPro" id="IPR043129">
    <property type="entry name" value="ATPase_NBD"/>
</dbReference>
<dbReference type="InterPro" id="IPR023505">
    <property type="entry name" value="N-acetyl-D-glucosamine_kinase"/>
</dbReference>
<dbReference type="InterPro" id="IPR000600">
    <property type="entry name" value="ROK"/>
</dbReference>
<dbReference type="InterPro" id="IPR049874">
    <property type="entry name" value="ROK_cs"/>
</dbReference>
<dbReference type="NCBIfam" id="NF009835">
    <property type="entry name" value="PRK13310.1"/>
    <property type="match status" value="1"/>
</dbReference>
<dbReference type="PANTHER" id="PTHR18964:SF162">
    <property type="entry name" value="N-ACETYL-D-GLUCOSAMINE KINASE"/>
    <property type="match status" value="1"/>
</dbReference>
<dbReference type="PANTHER" id="PTHR18964">
    <property type="entry name" value="ROK (REPRESSOR, ORF, KINASE) FAMILY"/>
    <property type="match status" value="1"/>
</dbReference>
<dbReference type="Pfam" id="PF00480">
    <property type="entry name" value="ROK"/>
    <property type="match status" value="1"/>
</dbReference>
<dbReference type="SUPFAM" id="SSF53067">
    <property type="entry name" value="Actin-like ATPase domain"/>
    <property type="match status" value="1"/>
</dbReference>
<dbReference type="PROSITE" id="PS01125">
    <property type="entry name" value="ROK"/>
    <property type="match status" value="1"/>
</dbReference>
<organism>
    <name type="scientific">Salmonella typhimurium (strain LT2 / SGSC1412 / ATCC 700720)</name>
    <dbReference type="NCBI Taxonomy" id="99287"/>
    <lineage>
        <taxon>Bacteria</taxon>
        <taxon>Pseudomonadati</taxon>
        <taxon>Pseudomonadota</taxon>
        <taxon>Gammaproteobacteria</taxon>
        <taxon>Enterobacterales</taxon>
        <taxon>Enterobacteriaceae</taxon>
        <taxon>Salmonella</taxon>
    </lineage>
</organism>